<gene>
    <name evidence="3" type="primary">swnR</name>
    <name type="ORF">MAA_08621</name>
</gene>
<name>SWNR_METRA</name>
<sequence>MRVAIAGYGDLTRYICEEFVKAGHVLVILTRSYKPQLESQGVAQAITDYSPSSLRAPLADCEVLISTISDISSAYTNVHRNLILACQESPRCKRFIPAEFVADIEAYPDEPGFYYAPHEPIREMLRGQTDLEWTLVCIGWLSDYFVPSKNRHIKDIGEFHPMNWAGNKIVIPGTGNEPVDFTWARDVVRGLASLIEAPRGSWEPYTFMSGERSCWNDATRLAVQKYRPGIPIQHVSLHSVAGMIKTAKDENTEVLADYYLLSISQACAIPTDKVEAHREKYFSGVTFRSLRDGLCQVDEHPDSIL</sequence>
<dbReference type="EC" id="1.5.3.7" evidence="5"/>
<dbReference type="EMBL" id="ADNJ02000001">
    <property type="protein sequence ID" value="EFY95968.1"/>
    <property type="molecule type" value="Genomic_DNA"/>
</dbReference>
<dbReference type="RefSeq" id="XP_007824810.1">
    <property type="nucleotide sequence ID" value="XM_007826619.1"/>
</dbReference>
<dbReference type="SMR" id="E9F8M2"/>
<dbReference type="GeneID" id="19262907"/>
<dbReference type="KEGG" id="maj:MAA_08621"/>
<dbReference type="HOGENOM" id="CLU_044876_5_0_1"/>
<dbReference type="OrthoDB" id="419598at2759"/>
<dbReference type="Proteomes" id="UP000002498">
    <property type="component" value="Unassembled WGS sequence"/>
</dbReference>
<dbReference type="GO" id="GO:0050031">
    <property type="term" value="F:L-pipecolate oxidase activity"/>
    <property type="evidence" value="ECO:0007669"/>
    <property type="project" value="UniProtKB-EC"/>
</dbReference>
<dbReference type="Gene3D" id="3.40.50.720">
    <property type="entry name" value="NAD(P)-binding Rossmann-like Domain"/>
    <property type="match status" value="1"/>
</dbReference>
<dbReference type="Gene3D" id="3.90.25.10">
    <property type="entry name" value="UDP-galactose 4-epimerase, domain 1"/>
    <property type="match status" value="1"/>
</dbReference>
<dbReference type="InterPro" id="IPR016040">
    <property type="entry name" value="NAD(P)-bd_dom"/>
</dbReference>
<dbReference type="InterPro" id="IPR036291">
    <property type="entry name" value="NAD(P)-bd_dom_sf"/>
</dbReference>
<dbReference type="InterPro" id="IPR051609">
    <property type="entry name" value="NmrA/Isoflavone_reductase-like"/>
</dbReference>
<dbReference type="PANTHER" id="PTHR47706:SF4">
    <property type="entry name" value="NMRA-LIKE DOMAIN-CONTAINING PROTEIN"/>
    <property type="match status" value="1"/>
</dbReference>
<dbReference type="PANTHER" id="PTHR47706">
    <property type="entry name" value="NMRA-LIKE FAMILY PROTEIN"/>
    <property type="match status" value="1"/>
</dbReference>
<dbReference type="Pfam" id="PF13460">
    <property type="entry name" value="NAD_binding_10"/>
    <property type="match status" value="1"/>
</dbReference>
<dbReference type="SUPFAM" id="SSF51735">
    <property type="entry name" value="NAD(P)-binding Rossmann-fold domains"/>
    <property type="match status" value="1"/>
</dbReference>
<evidence type="ECO:0000269" key="1">
    <source>
    </source>
</evidence>
<evidence type="ECO:0000269" key="2">
    <source>
    </source>
</evidence>
<evidence type="ECO:0000303" key="3">
    <source>
    </source>
</evidence>
<evidence type="ECO:0000305" key="4"/>
<evidence type="ECO:0000305" key="5">
    <source>
    </source>
</evidence>
<proteinExistence type="inferred from homology"/>
<protein>
    <recommendedName>
        <fullName evidence="3">Oxidoreductase swnR</fullName>
        <ecNumber evidence="5">1.5.3.7</ecNumber>
    </recommendedName>
    <alternativeName>
        <fullName evidence="3">Swainsonine biosynthesis gene cluster protein R</fullName>
    </alternativeName>
</protein>
<reference key="1">
    <citation type="journal article" date="2011" name="PLoS Genet.">
        <title>Genome sequencing and comparative transcriptomics of the model entomopathogenic fungi Metarhizium anisopliae and M. acridum.</title>
        <authorList>
            <person name="Gao Q."/>
            <person name="Jin K."/>
            <person name="Ying S.-H."/>
            <person name="Zhang Y."/>
            <person name="Xiao G."/>
            <person name="Shang Y."/>
            <person name="Duan Z."/>
            <person name="Hu X."/>
            <person name="Xie X.-Q."/>
            <person name="Zhou G."/>
            <person name="Peng G."/>
            <person name="Luo Z."/>
            <person name="Huang W."/>
            <person name="Wang B."/>
            <person name="Fang W."/>
            <person name="Wang S."/>
            <person name="Zhong Y."/>
            <person name="Ma L.-J."/>
            <person name="St Leger R.J."/>
            <person name="Zhao G.-P."/>
            <person name="Pei Y."/>
            <person name="Feng M.-G."/>
            <person name="Xia Y."/>
            <person name="Wang C."/>
        </authorList>
    </citation>
    <scope>NUCLEOTIDE SEQUENCE [LARGE SCALE GENOMIC DNA]</scope>
    <source>
        <strain>ARSEF 23 / ATCC MYA-3075</strain>
    </source>
</reference>
<reference key="2">
    <citation type="journal article" date="2014" name="Proc. Natl. Acad. Sci. U.S.A.">
        <title>Trajectory and genomic determinants of fungal-pathogen speciation and host adaptation.</title>
        <authorList>
            <person name="Hu X."/>
            <person name="Xiao G."/>
            <person name="Zheng P."/>
            <person name="Shang Y."/>
            <person name="Su Y."/>
            <person name="Zhang X."/>
            <person name="Liu X."/>
            <person name="Zhan S."/>
            <person name="St Leger R.J."/>
            <person name="Wang C."/>
        </authorList>
    </citation>
    <scope>GENOME REANNOTATION</scope>
    <source>
        <strain>ARSEF 23 / ATCC MYA-3075</strain>
    </source>
</reference>
<reference key="3">
    <citation type="journal article" date="2017" name="G3 (Bethesda)">
        <title>Swainsonine biosynthesis genes in diverse symbiotic and pathogenic fungi.</title>
        <authorList>
            <person name="Cook D."/>
            <person name="Donzelli B.G."/>
            <person name="Creamer R."/>
            <person name="Baucom D.L."/>
            <person name="Gardner D.R."/>
            <person name="Pan J."/>
            <person name="Moore N."/>
            <person name="Jaromczyk J.W."/>
            <person name="Schardl C.L."/>
        </authorList>
    </citation>
    <scope>FUNCTION</scope>
    <scope>PATHWAY</scope>
</reference>
<reference key="4">
    <citation type="journal article" date="2020" name="ACS Chem. Biol.">
        <title>Unveiling of Swainsonine Biosynthesis via a Multibranched Pathway in Fungi.</title>
        <authorList>
            <person name="Luo F."/>
            <person name="Hong S."/>
            <person name="Chen B."/>
            <person name="Yin Y."/>
            <person name="Tang G."/>
            <person name="Hu F."/>
            <person name="Zhang H."/>
            <person name="Wang C."/>
        </authorList>
    </citation>
    <scope>FUNCTION</scope>
    <scope>DISRUPTION PHENOTYPE</scope>
    <scope>PATHWAY</scope>
</reference>
<keyword id="KW-0521">NADP</keyword>
<keyword id="KW-0560">Oxidoreductase</keyword>
<organism>
    <name type="scientific">Metarhizium robertsii (strain ARSEF 23 / ATCC MYA-3075)</name>
    <name type="common">Metarhizium anisopliae (strain ARSEF 23)</name>
    <dbReference type="NCBI Taxonomy" id="655844"/>
    <lineage>
        <taxon>Eukaryota</taxon>
        <taxon>Fungi</taxon>
        <taxon>Dikarya</taxon>
        <taxon>Ascomycota</taxon>
        <taxon>Pezizomycotina</taxon>
        <taxon>Sordariomycetes</taxon>
        <taxon>Hypocreomycetidae</taxon>
        <taxon>Hypocreales</taxon>
        <taxon>Clavicipitaceae</taxon>
        <taxon>Metarhizium</taxon>
    </lineage>
</organism>
<feature type="chain" id="PRO_0000441186" description="Oxidoreductase swnR">
    <location>
        <begin position="1"/>
        <end position="305"/>
    </location>
</feature>
<accession>E9F8M2</accession>
<comment type="function">
    <text evidence="1 2 5">Oxidoreductase; part of the gene cluster that mediates the biosynthesis of swainsonine (SW), a cytotoxic fungal alkaloid and a potential cancer therapy drug (PubMed:28381497, PubMed:32786262). Swainsonine production occurs via a multibranched pathway and is dispensable for fungal colonization of plants and infection of insect hosts (PubMed:32786262). The first step of swainsonine biosynthesis is the production of the precursor pipecolic acid (PA) via conversion of L-lysine (Lys) to 1-piperideine-6-carboxylate (P6C) by the aminotransferase swnA, the latter being further reduced to PA by the reductase swnR (PubMed:32786262). PA can be converted from lysine by both the SW biosynthetic cluster and the unclustered genes such as lysine cyclodeaminase (PubMed:32786262). The PKS-NRPS hybrid synthetase swnK uptakes and condensates PA and malonyl-CoA with and without skipping of the ketoreductase (KR) domain in order to produce 3 intermediates, 1-oxoindolizidine, (1S)-1-hydroxyindolizin, and (1R)-1-hydroxyindolizine; with the transisomer (1S)-1-hydroxyindolizin being predominant (PubMed:32786262). The terminal thioester reductase (TE) domain of swnK is involved in reduction of the thioester bond to release the intermediate aldehydes (PubMed:32786262). The oxidoreductase swnN could contribute to the reduction of 1-oxoindolizidine to (1S)-1-hydroxyindolizin and (1R)-1-hydroxyindolizine, contributing to the major route of SW production (Probable). The dioxygenase swnH2 would be responsible for the oxidization of (1R)-1-hydroxyindolizine into (1R,2S)-1,2-dihydroxyindolizine and of (1S)-1-hydroxyindolizin to yield both (1R,2S)-1,2-dihydroxyindolizine and (1S,2S)-1,2-dihydroxyindolizine (PubMed:32786262). The dioxygenase swnH1 then performs the conversion of the 1,2-dihydroxyindolizine epimers to SW (PubMed:32786262).</text>
</comment>
<comment type="catalytic activity">
    <reaction evidence="5">
        <text>L-pipecolate + O2 = L-1-piperideine-6-carboxylate + H2O2 + H(+)</text>
        <dbReference type="Rhea" id="RHEA:11992"/>
        <dbReference type="ChEBI" id="CHEBI:15378"/>
        <dbReference type="ChEBI" id="CHEBI:15379"/>
        <dbReference type="ChEBI" id="CHEBI:16240"/>
        <dbReference type="ChEBI" id="CHEBI:58769"/>
        <dbReference type="ChEBI" id="CHEBI:61185"/>
        <dbReference type="EC" id="1.5.3.7"/>
    </reaction>
    <physiologicalReaction direction="right-to-left" evidence="5">
        <dbReference type="Rhea" id="RHEA:11994"/>
    </physiologicalReaction>
</comment>
<comment type="pathway">
    <text evidence="5">Mycotoxin biosynthesis.</text>
</comment>
<comment type="disruption phenotype">
    <text evidence="2">Does not affect the production of swainsonine.</text>
</comment>
<comment type="similarity">
    <text evidence="4">Belongs to the NmrA-type oxidoreductase family. Isoflavone reductase subfamily.</text>
</comment>